<gene>
    <name evidence="1" type="primary">rpsG</name>
    <name type="ordered locus">CKL_0220</name>
</gene>
<feature type="chain" id="PRO_1000081277" description="Small ribosomal subunit protein uS7">
    <location>
        <begin position="1"/>
        <end position="156"/>
    </location>
</feature>
<keyword id="KW-1185">Reference proteome</keyword>
<keyword id="KW-0687">Ribonucleoprotein</keyword>
<keyword id="KW-0689">Ribosomal protein</keyword>
<keyword id="KW-0694">RNA-binding</keyword>
<keyword id="KW-0699">rRNA-binding</keyword>
<keyword id="KW-0820">tRNA-binding</keyword>
<protein>
    <recommendedName>
        <fullName evidence="1">Small ribosomal subunit protein uS7</fullName>
    </recommendedName>
    <alternativeName>
        <fullName evidence="2">30S ribosomal protein S7</fullName>
    </alternativeName>
</protein>
<comment type="function">
    <text evidence="1">One of the primary rRNA binding proteins, it binds directly to 16S rRNA where it nucleates assembly of the head domain of the 30S subunit. Is located at the subunit interface close to the decoding center, probably blocks exit of the E-site tRNA.</text>
</comment>
<comment type="subunit">
    <text evidence="1">Part of the 30S ribosomal subunit. Contacts proteins S9 and S11.</text>
</comment>
<comment type="similarity">
    <text evidence="1">Belongs to the universal ribosomal protein uS7 family.</text>
</comment>
<dbReference type="EMBL" id="CP000673">
    <property type="protein sequence ID" value="EDK32274.1"/>
    <property type="molecule type" value="Genomic_DNA"/>
</dbReference>
<dbReference type="RefSeq" id="WP_011988800.1">
    <property type="nucleotide sequence ID" value="NC_009706.1"/>
</dbReference>
<dbReference type="SMR" id="A5N4P3"/>
<dbReference type="STRING" id="431943.CKL_0220"/>
<dbReference type="KEGG" id="ckl:CKL_0220"/>
<dbReference type="eggNOG" id="COG0049">
    <property type="taxonomic scope" value="Bacteria"/>
</dbReference>
<dbReference type="HOGENOM" id="CLU_072226_1_1_9"/>
<dbReference type="Proteomes" id="UP000002411">
    <property type="component" value="Chromosome"/>
</dbReference>
<dbReference type="GO" id="GO:0015935">
    <property type="term" value="C:small ribosomal subunit"/>
    <property type="evidence" value="ECO:0007669"/>
    <property type="project" value="InterPro"/>
</dbReference>
<dbReference type="GO" id="GO:0019843">
    <property type="term" value="F:rRNA binding"/>
    <property type="evidence" value="ECO:0007669"/>
    <property type="project" value="UniProtKB-UniRule"/>
</dbReference>
<dbReference type="GO" id="GO:0003735">
    <property type="term" value="F:structural constituent of ribosome"/>
    <property type="evidence" value="ECO:0007669"/>
    <property type="project" value="InterPro"/>
</dbReference>
<dbReference type="GO" id="GO:0000049">
    <property type="term" value="F:tRNA binding"/>
    <property type="evidence" value="ECO:0007669"/>
    <property type="project" value="UniProtKB-UniRule"/>
</dbReference>
<dbReference type="GO" id="GO:0006412">
    <property type="term" value="P:translation"/>
    <property type="evidence" value="ECO:0007669"/>
    <property type="project" value="UniProtKB-UniRule"/>
</dbReference>
<dbReference type="CDD" id="cd14869">
    <property type="entry name" value="uS7_Bacteria"/>
    <property type="match status" value="1"/>
</dbReference>
<dbReference type="FunFam" id="1.10.455.10:FF:000001">
    <property type="entry name" value="30S ribosomal protein S7"/>
    <property type="match status" value="1"/>
</dbReference>
<dbReference type="Gene3D" id="1.10.455.10">
    <property type="entry name" value="Ribosomal protein S7 domain"/>
    <property type="match status" value="1"/>
</dbReference>
<dbReference type="HAMAP" id="MF_00480_B">
    <property type="entry name" value="Ribosomal_uS7_B"/>
    <property type="match status" value="1"/>
</dbReference>
<dbReference type="InterPro" id="IPR000235">
    <property type="entry name" value="Ribosomal_uS7"/>
</dbReference>
<dbReference type="InterPro" id="IPR005717">
    <property type="entry name" value="Ribosomal_uS7_bac/org-type"/>
</dbReference>
<dbReference type="InterPro" id="IPR020606">
    <property type="entry name" value="Ribosomal_uS7_CS"/>
</dbReference>
<dbReference type="InterPro" id="IPR023798">
    <property type="entry name" value="Ribosomal_uS7_dom"/>
</dbReference>
<dbReference type="InterPro" id="IPR036823">
    <property type="entry name" value="Ribosomal_uS7_dom_sf"/>
</dbReference>
<dbReference type="NCBIfam" id="TIGR01029">
    <property type="entry name" value="rpsG_bact"/>
    <property type="match status" value="1"/>
</dbReference>
<dbReference type="PANTHER" id="PTHR11205">
    <property type="entry name" value="RIBOSOMAL PROTEIN S7"/>
    <property type="match status" value="1"/>
</dbReference>
<dbReference type="Pfam" id="PF00177">
    <property type="entry name" value="Ribosomal_S7"/>
    <property type="match status" value="1"/>
</dbReference>
<dbReference type="PIRSF" id="PIRSF002122">
    <property type="entry name" value="RPS7p_RPS7a_RPS5e_RPS7o"/>
    <property type="match status" value="1"/>
</dbReference>
<dbReference type="SUPFAM" id="SSF47973">
    <property type="entry name" value="Ribosomal protein S7"/>
    <property type="match status" value="1"/>
</dbReference>
<dbReference type="PROSITE" id="PS00052">
    <property type="entry name" value="RIBOSOMAL_S7"/>
    <property type="match status" value="1"/>
</dbReference>
<accession>A5N4P3</accession>
<sequence length="156" mass="17849">MARKGHIGKRDVLPDPVYNSKVVTKLINNIMKDGKKGVAQKICYGAFDIIEQKTSKEPMEVFEEAMNNIMPLLEVKARRIGGATYQVPIEVRPERRQTLGIRWLLVASRKRGEKYMRERLAAELMDAANNTGTAVKKREDTHKMAEANKAFAHYRY</sequence>
<evidence type="ECO:0000255" key="1">
    <source>
        <dbReference type="HAMAP-Rule" id="MF_00480"/>
    </source>
</evidence>
<evidence type="ECO:0000305" key="2"/>
<organism>
    <name type="scientific">Clostridium kluyveri (strain ATCC 8527 / DSM 555 / NBRC 12016 / NCIMB 10680 / K1)</name>
    <dbReference type="NCBI Taxonomy" id="431943"/>
    <lineage>
        <taxon>Bacteria</taxon>
        <taxon>Bacillati</taxon>
        <taxon>Bacillota</taxon>
        <taxon>Clostridia</taxon>
        <taxon>Eubacteriales</taxon>
        <taxon>Clostridiaceae</taxon>
        <taxon>Clostridium</taxon>
    </lineage>
</organism>
<proteinExistence type="inferred from homology"/>
<name>RS7_CLOK5</name>
<reference key="1">
    <citation type="journal article" date="2008" name="Proc. Natl. Acad. Sci. U.S.A.">
        <title>The genome of Clostridium kluyveri, a strict anaerobe with unique metabolic features.</title>
        <authorList>
            <person name="Seedorf H."/>
            <person name="Fricke W.F."/>
            <person name="Veith B."/>
            <person name="Brueggemann H."/>
            <person name="Liesegang H."/>
            <person name="Strittmatter A."/>
            <person name="Miethke M."/>
            <person name="Buckel W."/>
            <person name="Hinderberger J."/>
            <person name="Li F."/>
            <person name="Hagemeier C."/>
            <person name="Thauer R.K."/>
            <person name="Gottschalk G."/>
        </authorList>
    </citation>
    <scope>NUCLEOTIDE SEQUENCE [LARGE SCALE GENOMIC DNA]</scope>
    <source>
        <strain>ATCC 8527 / DSM 555 / NBRC 12016 / NCIMB 10680 / K1</strain>
    </source>
</reference>